<feature type="chain" id="PRO_0000348239" description="TPR and ankyrin repeat-containing protein 1">
    <location>
        <begin position="1"/>
        <end position="2999"/>
    </location>
</feature>
<feature type="repeat" description="TPR 1">
    <location>
        <begin position="144"/>
        <end position="177"/>
    </location>
</feature>
<feature type="repeat" description="TPR 2">
    <location>
        <begin position="179"/>
        <end position="211"/>
    </location>
</feature>
<feature type="repeat" description="ANK 1">
    <location>
        <begin position="297"/>
        <end position="327"/>
    </location>
</feature>
<feature type="repeat" description="ANK 2">
    <location>
        <begin position="328"/>
        <end position="361"/>
    </location>
</feature>
<feature type="repeat" description="ANK 3">
    <location>
        <begin position="369"/>
        <end position="405"/>
    </location>
</feature>
<feature type="repeat" description="ANK 4">
    <location>
        <begin position="538"/>
        <end position="567"/>
    </location>
</feature>
<feature type="repeat" description="ANK 5">
    <location>
        <begin position="572"/>
        <end position="593"/>
    </location>
</feature>
<feature type="repeat" description="ANK 6">
    <location>
        <begin position="621"/>
        <end position="654"/>
    </location>
</feature>
<feature type="repeat" description="TPR 3">
    <location>
        <begin position="1772"/>
        <end position="1805"/>
    </location>
</feature>
<feature type="repeat" description="TPR 4">
    <location>
        <begin position="1866"/>
        <end position="1899"/>
    </location>
</feature>
<feature type="region of interest" description="Disordered" evidence="1">
    <location>
        <begin position="1"/>
        <end position="87"/>
    </location>
</feature>
<feature type="region of interest" description="Disordered" evidence="1">
    <location>
        <begin position="684"/>
        <end position="722"/>
    </location>
</feature>
<feature type="region of interest" description="Disordered" evidence="1">
    <location>
        <begin position="773"/>
        <end position="831"/>
    </location>
</feature>
<feature type="region of interest" description="Disordered" evidence="1">
    <location>
        <begin position="1151"/>
        <end position="1211"/>
    </location>
</feature>
<feature type="region of interest" description="Disordered" evidence="1">
    <location>
        <begin position="1318"/>
        <end position="1344"/>
    </location>
</feature>
<feature type="compositionally biased region" description="Low complexity" evidence="1">
    <location>
        <begin position="19"/>
        <end position="36"/>
    </location>
</feature>
<feature type="compositionally biased region" description="Polar residues" evidence="1">
    <location>
        <begin position="699"/>
        <end position="717"/>
    </location>
</feature>
<feature type="compositionally biased region" description="Polar residues" evidence="1">
    <location>
        <begin position="801"/>
        <end position="815"/>
    </location>
</feature>
<feature type="compositionally biased region" description="Basic and acidic residues" evidence="1">
    <location>
        <begin position="1151"/>
        <end position="1164"/>
    </location>
</feature>
<feature type="compositionally biased region" description="Acidic residues" evidence="1">
    <location>
        <begin position="1318"/>
        <end position="1327"/>
    </location>
</feature>
<feature type="splice variant" id="VSP_035117" description="In isoform 2." evidence="3">
    <location>
        <begin position="1"/>
        <end position="1699"/>
    </location>
</feature>
<feature type="sequence conflict" description="In Ref. 5; BAC97929." evidence="4" ref="5">
    <location>
        <begin position="1849"/>
        <end position="1851"/>
    </location>
</feature>
<comment type="alternative products">
    <event type="alternative splicing"/>
    <isoform>
        <id>Q8BV79-1</id>
        <name>1</name>
        <sequence type="displayed"/>
    </isoform>
    <isoform>
        <id>Q8BV79-2</id>
        <name>2</name>
        <sequence type="described" ref="VSP_035117"/>
    </isoform>
</comment>
<comment type="tissue specificity">
    <text evidence="2">Expressed only in the brain. Detected in the hippocampus, hypothalamus and cingulate gyrus.</text>
</comment>
<reference key="1">
    <citation type="journal article" date="2009" name="PLoS Biol.">
        <title>Lineage-specific biology revealed by a finished genome assembly of the mouse.</title>
        <authorList>
            <person name="Church D.M."/>
            <person name="Goodstadt L."/>
            <person name="Hillier L.W."/>
            <person name="Zody M.C."/>
            <person name="Goldstein S."/>
            <person name="She X."/>
            <person name="Bult C.J."/>
            <person name="Agarwala R."/>
            <person name="Cherry J.L."/>
            <person name="DiCuccio M."/>
            <person name="Hlavina W."/>
            <person name="Kapustin Y."/>
            <person name="Meric P."/>
            <person name="Maglott D."/>
            <person name="Birtle Z."/>
            <person name="Marques A.C."/>
            <person name="Graves T."/>
            <person name="Zhou S."/>
            <person name="Teague B."/>
            <person name="Potamousis K."/>
            <person name="Churas C."/>
            <person name="Place M."/>
            <person name="Herschleb J."/>
            <person name="Runnheim R."/>
            <person name="Forrest D."/>
            <person name="Amos-Landgraf J."/>
            <person name="Schwartz D.C."/>
            <person name="Cheng Z."/>
            <person name="Lindblad-Toh K."/>
            <person name="Eichler E.E."/>
            <person name="Ponting C.P."/>
        </authorList>
    </citation>
    <scope>NUCLEOTIDE SEQUENCE [LARGE SCALE GENOMIC DNA]</scope>
    <source>
        <strain>C57BL/6J</strain>
    </source>
</reference>
<reference key="2">
    <citation type="journal article" date="2004" name="Genome Res.">
        <title>The status, quality, and expansion of the NIH full-length cDNA project: the Mammalian Gene Collection (MGC).</title>
        <authorList>
            <consortium name="The MGC Project Team"/>
        </authorList>
    </citation>
    <scope>NUCLEOTIDE SEQUENCE [LARGE SCALE MRNA] (ISOFORM 2)</scope>
    <source>
        <strain>C57BL/6J</strain>
        <tissue>Brain</tissue>
    </source>
</reference>
<reference key="3">
    <citation type="journal article" date="2005" name="Science">
        <title>The transcriptional landscape of the mammalian genome.</title>
        <authorList>
            <person name="Carninci P."/>
            <person name="Kasukawa T."/>
            <person name="Katayama S."/>
            <person name="Gough J."/>
            <person name="Frith M.C."/>
            <person name="Maeda N."/>
            <person name="Oyama R."/>
            <person name="Ravasi T."/>
            <person name="Lenhard B."/>
            <person name="Wells C."/>
            <person name="Kodzius R."/>
            <person name="Shimokawa K."/>
            <person name="Bajic V.B."/>
            <person name="Brenner S.E."/>
            <person name="Batalov S."/>
            <person name="Forrest A.R."/>
            <person name="Zavolan M."/>
            <person name="Davis M.J."/>
            <person name="Wilming L.G."/>
            <person name="Aidinis V."/>
            <person name="Allen J.E."/>
            <person name="Ambesi-Impiombato A."/>
            <person name="Apweiler R."/>
            <person name="Aturaliya R.N."/>
            <person name="Bailey T.L."/>
            <person name="Bansal M."/>
            <person name="Baxter L."/>
            <person name="Beisel K.W."/>
            <person name="Bersano T."/>
            <person name="Bono H."/>
            <person name="Chalk A.M."/>
            <person name="Chiu K.P."/>
            <person name="Choudhary V."/>
            <person name="Christoffels A."/>
            <person name="Clutterbuck D.R."/>
            <person name="Crowe M.L."/>
            <person name="Dalla E."/>
            <person name="Dalrymple B.P."/>
            <person name="de Bono B."/>
            <person name="Della Gatta G."/>
            <person name="di Bernardo D."/>
            <person name="Down T."/>
            <person name="Engstrom P."/>
            <person name="Fagiolini M."/>
            <person name="Faulkner G."/>
            <person name="Fletcher C.F."/>
            <person name="Fukushima T."/>
            <person name="Furuno M."/>
            <person name="Futaki S."/>
            <person name="Gariboldi M."/>
            <person name="Georgii-Hemming P."/>
            <person name="Gingeras T.R."/>
            <person name="Gojobori T."/>
            <person name="Green R.E."/>
            <person name="Gustincich S."/>
            <person name="Harbers M."/>
            <person name="Hayashi Y."/>
            <person name="Hensch T.K."/>
            <person name="Hirokawa N."/>
            <person name="Hill D."/>
            <person name="Huminiecki L."/>
            <person name="Iacono M."/>
            <person name="Ikeo K."/>
            <person name="Iwama A."/>
            <person name="Ishikawa T."/>
            <person name="Jakt M."/>
            <person name="Kanapin A."/>
            <person name="Katoh M."/>
            <person name="Kawasawa Y."/>
            <person name="Kelso J."/>
            <person name="Kitamura H."/>
            <person name="Kitano H."/>
            <person name="Kollias G."/>
            <person name="Krishnan S.P."/>
            <person name="Kruger A."/>
            <person name="Kummerfeld S.K."/>
            <person name="Kurochkin I.V."/>
            <person name="Lareau L.F."/>
            <person name="Lazarevic D."/>
            <person name="Lipovich L."/>
            <person name="Liu J."/>
            <person name="Liuni S."/>
            <person name="McWilliam S."/>
            <person name="Madan Babu M."/>
            <person name="Madera M."/>
            <person name="Marchionni L."/>
            <person name="Matsuda H."/>
            <person name="Matsuzawa S."/>
            <person name="Miki H."/>
            <person name="Mignone F."/>
            <person name="Miyake S."/>
            <person name="Morris K."/>
            <person name="Mottagui-Tabar S."/>
            <person name="Mulder N."/>
            <person name="Nakano N."/>
            <person name="Nakauchi H."/>
            <person name="Ng P."/>
            <person name="Nilsson R."/>
            <person name="Nishiguchi S."/>
            <person name="Nishikawa S."/>
            <person name="Nori F."/>
            <person name="Ohara O."/>
            <person name="Okazaki Y."/>
            <person name="Orlando V."/>
            <person name="Pang K.C."/>
            <person name="Pavan W.J."/>
            <person name="Pavesi G."/>
            <person name="Pesole G."/>
            <person name="Petrovsky N."/>
            <person name="Piazza S."/>
            <person name="Reed J."/>
            <person name="Reid J.F."/>
            <person name="Ring B.Z."/>
            <person name="Ringwald M."/>
            <person name="Rost B."/>
            <person name="Ruan Y."/>
            <person name="Salzberg S.L."/>
            <person name="Sandelin A."/>
            <person name="Schneider C."/>
            <person name="Schoenbach C."/>
            <person name="Sekiguchi K."/>
            <person name="Semple C.A."/>
            <person name="Seno S."/>
            <person name="Sessa L."/>
            <person name="Sheng Y."/>
            <person name="Shibata Y."/>
            <person name="Shimada H."/>
            <person name="Shimada K."/>
            <person name="Silva D."/>
            <person name="Sinclair B."/>
            <person name="Sperling S."/>
            <person name="Stupka E."/>
            <person name="Sugiura K."/>
            <person name="Sultana R."/>
            <person name="Takenaka Y."/>
            <person name="Taki K."/>
            <person name="Tammoja K."/>
            <person name="Tan S.L."/>
            <person name="Tang S."/>
            <person name="Taylor M.S."/>
            <person name="Tegner J."/>
            <person name="Teichmann S.A."/>
            <person name="Ueda H.R."/>
            <person name="van Nimwegen E."/>
            <person name="Verardo R."/>
            <person name="Wei C.L."/>
            <person name="Yagi K."/>
            <person name="Yamanishi H."/>
            <person name="Zabarovsky E."/>
            <person name="Zhu S."/>
            <person name="Zimmer A."/>
            <person name="Hide W."/>
            <person name="Bult C."/>
            <person name="Grimmond S.M."/>
            <person name="Teasdale R.D."/>
            <person name="Liu E.T."/>
            <person name="Brusic V."/>
            <person name="Quackenbush J."/>
            <person name="Wahlestedt C."/>
            <person name="Mattick J.S."/>
            <person name="Hume D.A."/>
            <person name="Kai C."/>
            <person name="Sasaki D."/>
            <person name="Tomaru Y."/>
            <person name="Fukuda S."/>
            <person name="Kanamori-Katayama M."/>
            <person name="Suzuki M."/>
            <person name="Aoki J."/>
            <person name="Arakawa T."/>
            <person name="Iida J."/>
            <person name="Imamura K."/>
            <person name="Itoh M."/>
            <person name="Kato T."/>
            <person name="Kawaji H."/>
            <person name="Kawagashira N."/>
            <person name="Kawashima T."/>
            <person name="Kojima M."/>
            <person name="Kondo S."/>
            <person name="Konno H."/>
            <person name="Nakano K."/>
            <person name="Ninomiya N."/>
            <person name="Nishio T."/>
            <person name="Okada M."/>
            <person name="Plessy C."/>
            <person name="Shibata K."/>
            <person name="Shiraki T."/>
            <person name="Suzuki S."/>
            <person name="Tagami M."/>
            <person name="Waki K."/>
            <person name="Watahiki A."/>
            <person name="Okamura-Oho Y."/>
            <person name="Suzuki H."/>
            <person name="Kawai J."/>
            <person name="Hayashizaki Y."/>
        </authorList>
    </citation>
    <scope>NUCLEOTIDE SEQUENCE [LARGE SCALE MRNA] OF 1-914 (ISOFORM 1)</scope>
    <source>
        <strain>C57BL/6J</strain>
        <tissue>Hypothalamus</tissue>
    </source>
</reference>
<reference key="4">
    <citation type="journal article" date="1998" name="J. Neuroimmunol.">
        <title>Identification and cloning of a brain autoantigen in neuro-behavioral SLE.</title>
        <authorList>
            <person name="Moore P.M."/>
            <person name="Vo T."/>
            <person name="Carlock L.R."/>
        </authorList>
    </citation>
    <scope>NUCLEOTIDE SEQUENCE [MRNA] OF 249-791 (ISOFORM 1)</scope>
    <scope>TISSUE SPECIFICITY</scope>
</reference>
<reference key="5">
    <citation type="journal article" date="2003" name="DNA Res.">
        <title>Prediction of the coding sequences of mouse homologues of KIAA gene: III. The complete nucleotide sequences of 500 mouse KIAA-homologous cDNAs identified by screening of terminal sequences of cDNA clones randomly sampled from size-fractionated libraries.</title>
        <authorList>
            <person name="Okazaki N."/>
            <person name="Kikuno R."/>
            <person name="Ohara R."/>
            <person name="Inamoto S."/>
            <person name="Koseki H."/>
            <person name="Hiraoka S."/>
            <person name="Saga Y."/>
            <person name="Nagase T."/>
            <person name="Ohara O."/>
            <person name="Koga H."/>
        </authorList>
    </citation>
    <scope>NUCLEOTIDE SEQUENCE [LARGE SCALE MRNA] OF 1660-2999 (ISOFORM 1)</scope>
    <source>
        <tissue>Brain</tissue>
    </source>
</reference>
<organism>
    <name type="scientific">Mus musculus</name>
    <name type="common">Mouse</name>
    <dbReference type="NCBI Taxonomy" id="10090"/>
    <lineage>
        <taxon>Eukaryota</taxon>
        <taxon>Metazoa</taxon>
        <taxon>Chordata</taxon>
        <taxon>Craniata</taxon>
        <taxon>Vertebrata</taxon>
        <taxon>Euteleostomi</taxon>
        <taxon>Mammalia</taxon>
        <taxon>Eutheria</taxon>
        <taxon>Euarchontoglires</taxon>
        <taxon>Glires</taxon>
        <taxon>Rodentia</taxon>
        <taxon>Myomorpha</taxon>
        <taxon>Muroidea</taxon>
        <taxon>Muridae</taxon>
        <taxon>Murinae</taxon>
        <taxon>Mus</taxon>
        <taxon>Mus</taxon>
    </lineage>
</organism>
<dbReference type="EMBL" id="AC126677">
    <property type="status" value="NOT_ANNOTATED_CDS"/>
    <property type="molecule type" value="Genomic_DNA"/>
</dbReference>
<dbReference type="EMBL" id="AC113495">
    <property type="status" value="NOT_ANNOTATED_CDS"/>
    <property type="molecule type" value="Genomic_DNA"/>
</dbReference>
<dbReference type="EMBL" id="BC086653">
    <property type="protein sequence ID" value="AAH86653.1"/>
    <property type="molecule type" value="mRNA"/>
</dbReference>
<dbReference type="EMBL" id="AK079552">
    <property type="protein sequence ID" value="BAC37682.2"/>
    <property type="molecule type" value="mRNA"/>
</dbReference>
<dbReference type="EMBL" id="AK129119">
    <property type="protein sequence ID" value="BAC97929.1"/>
    <property type="molecule type" value="Transcribed_RNA"/>
</dbReference>
<dbReference type="CCDS" id="CCDS52942.1">
    <molecule id="Q8BV79-1"/>
</dbReference>
<dbReference type="RefSeq" id="NP_001158131.1">
    <molecule id="Q8BV79-1"/>
    <property type="nucleotide sequence ID" value="NM_001164659.1"/>
</dbReference>
<dbReference type="SMR" id="Q8BV79"/>
<dbReference type="BioGRID" id="236013">
    <property type="interactions" value="6"/>
</dbReference>
<dbReference type="FunCoup" id="Q8BV79">
    <property type="interactions" value="17"/>
</dbReference>
<dbReference type="IntAct" id="Q8BV79">
    <property type="interactions" value="2"/>
</dbReference>
<dbReference type="MINT" id="Q8BV79"/>
<dbReference type="STRING" id="10090.ENSMUSP00000077697"/>
<dbReference type="GlyGen" id="Q8BV79">
    <property type="glycosylation" value="3 sites"/>
</dbReference>
<dbReference type="iPTMnet" id="Q8BV79"/>
<dbReference type="PhosphoSitePlus" id="Q8BV79"/>
<dbReference type="PaxDb" id="10090-ENSMUSP00000077697"/>
<dbReference type="PeptideAtlas" id="Q8BV79"/>
<dbReference type="ProteomicsDB" id="298134">
    <molecule id="Q8BV79-1"/>
</dbReference>
<dbReference type="ProteomicsDB" id="298135">
    <molecule id="Q8BV79-2"/>
</dbReference>
<dbReference type="Antibodypedia" id="51967">
    <property type="antibodies" value="10 antibodies from 8 providers"/>
</dbReference>
<dbReference type="Ensembl" id="ENSMUST00000078626.8">
    <molecule id="Q8BV79-1"/>
    <property type="protein sequence ID" value="ENSMUSP00000077697.4"/>
    <property type="gene ID" value="ENSMUSG00000062296.9"/>
</dbReference>
<dbReference type="GeneID" id="320429"/>
<dbReference type="KEGG" id="mmu:320429"/>
<dbReference type="UCSC" id="uc009rvt.2">
    <molecule id="Q8BV79-1"/>
    <property type="organism name" value="mouse"/>
</dbReference>
<dbReference type="UCSC" id="uc009rvu.1">
    <molecule id="Q8BV79-2"/>
    <property type="organism name" value="mouse"/>
</dbReference>
<dbReference type="AGR" id="MGI:1341834"/>
<dbReference type="CTD" id="9881"/>
<dbReference type="MGI" id="MGI:1341834">
    <property type="gene designation" value="Trank1"/>
</dbReference>
<dbReference type="VEuPathDB" id="HostDB:ENSMUSG00000062296"/>
<dbReference type="eggNOG" id="ENOG502QQZC">
    <property type="taxonomic scope" value="Eukaryota"/>
</dbReference>
<dbReference type="GeneTree" id="ENSGT00940000153370"/>
<dbReference type="HOGENOM" id="CLU_227614_0_0_1"/>
<dbReference type="InParanoid" id="Q8BV79"/>
<dbReference type="OMA" id="SQCEVEP"/>
<dbReference type="OrthoDB" id="3156807at2759"/>
<dbReference type="PhylomeDB" id="Q8BV79"/>
<dbReference type="TreeFam" id="TF335821"/>
<dbReference type="BioGRID-ORCS" id="320429">
    <property type="hits" value="2 hits in 76 CRISPR screens"/>
</dbReference>
<dbReference type="ChiTaRS" id="Trank1">
    <property type="organism name" value="mouse"/>
</dbReference>
<dbReference type="PRO" id="PR:Q8BV79"/>
<dbReference type="Proteomes" id="UP000000589">
    <property type="component" value="Chromosome 9"/>
</dbReference>
<dbReference type="RNAct" id="Q8BV79">
    <property type="molecule type" value="protein"/>
</dbReference>
<dbReference type="Bgee" id="ENSMUSG00000062296">
    <property type="expression patterns" value="Expressed in superior frontal gyrus and 117 other cell types or tissues"/>
</dbReference>
<dbReference type="ExpressionAtlas" id="Q8BV79">
    <property type="expression patterns" value="baseline and differential"/>
</dbReference>
<dbReference type="Gene3D" id="1.25.40.20">
    <property type="entry name" value="Ankyrin repeat-containing domain"/>
    <property type="match status" value="2"/>
</dbReference>
<dbReference type="Gene3D" id="3.40.50.300">
    <property type="entry name" value="P-loop containing nucleotide triphosphate hydrolases"/>
    <property type="match status" value="2"/>
</dbReference>
<dbReference type="Gene3D" id="1.25.40.10">
    <property type="entry name" value="Tetratricopeptide repeat domain"/>
    <property type="match status" value="1"/>
</dbReference>
<dbReference type="InterPro" id="IPR002110">
    <property type="entry name" value="Ankyrin_rpt"/>
</dbReference>
<dbReference type="InterPro" id="IPR036770">
    <property type="entry name" value="Ankyrin_rpt-contain_sf"/>
</dbReference>
<dbReference type="InterPro" id="IPR027417">
    <property type="entry name" value="P-loop_NTPase"/>
</dbReference>
<dbReference type="InterPro" id="IPR011990">
    <property type="entry name" value="TPR-like_helical_dom_sf"/>
</dbReference>
<dbReference type="InterPro" id="IPR039904">
    <property type="entry name" value="TRANK1"/>
</dbReference>
<dbReference type="PANTHER" id="PTHR21529">
    <property type="entry name" value="MAMMARY TURMOR VIRUS RECEPTOR HOMOLOG 1, 2 MTVR1, 2"/>
    <property type="match status" value="1"/>
</dbReference>
<dbReference type="PANTHER" id="PTHR21529:SF4">
    <property type="entry name" value="TPR AND ANKYRIN REPEAT-CONTAINING PROTEIN 1"/>
    <property type="match status" value="1"/>
</dbReference>
<dbReference type="SMART" id="SM00248">
    <property type="entry name" value="ANK"/>
    <property type="match status" value="4"/>
</dbReference>
<dbReference type="SUPFAM" id="SSF48403">
    <property type="entry name" value="Ankyrin repeat"/>
    <property type="match status" value="2"/>
</dbReference>
<dbReference type="SUPFAM" id="SSF52540">
    <property type="entry name" value="P-loop containing nucleoside triphosphate hydrolases"/>
    <property type="match status" value="1"/>
</dbReference>
<dbReference type="SUPFAM" id="SSF48452">
    <property type="entry name" value="TPR-like"/>
    <property type="match status" value="1"/>
</dbReference>
<dbReference type="PROSITE" id="PS50297">
    <property type="entry name" value="ANK_REP_REGION"/>
    <property type="match status" value="1"/>
</dbReference>
<dbReference type="PROSITE" id="PS50293">
    <property type="entry name" value="TPR_REGION"/>
    <property type="match status" value="1"/>
</dbReference>
<name>TRNK1_MOUSE</name>
<evidence type="ECO:0000256" key="1">
    <source>
        <dbReference type="SAM" id="MobiDB-lite"/>
    </source>
</evidence>
<evidence type="ECO:0000269" key="2">
    <source>
    </source>
</evidence>
<evidence type="ECO:0000303" key="3">
    <source>
    </source>
</evidence>
<evidence type="ECO:0000305" key="4"/>
<sequence length="2999" mass="343320">MASTTAGRRWPPRRRSSRRGPTPRSRAPGAKLSAPEAGPPRRGPLPRGGAGRDTLLGAKATPSSPAARRYVTALGPPQPRGSTDSACAALPQPVPHEPREAAFRLAPASERGASVSPARIPRRRRRVPAMWDPRAARTPPRELAMLLCNKSNAFYNLGKWNEAFLAAKECLQWDPTYVKGYYRAGYSLLHLLQPYEAARMFFEGLRLLQRSPDQLQVPDFLVGIFTTMSSDSIVLQSFLPCFDHIFTTGFSTEVWQYVIQKLAKKGLWHSFLLLSAKKDRLPSNIHVSELSLQSLFEKYVFIGFYEKLEQVPKLVQWLVSIGANIETIGPNPLHALMRLCIQARESQLFRWVMDQKPEWKEHINHRDDAGCTVLHVAAAHFPGYTSRRQTEDVQMLLSFGADPTLLDGHARTVVDVLKRNKNFRAIDKINSHLEKLASSSKGLSEIPAGLVCDVNRDCATTFIKFLLERQKWPEVLLLLTRKVSGQPQLRNGVIKDCDLSDLDICTVIPHLSSWDQRKTQLLSRLIDSGALPEGLQDSQDRPLLMCLRHEDFDLAFLLLTKGADPRSVSLVEGDTPLHAALHIFLDINADIGFNFLSHLLDLFLSNPTEFYYLNPNVQDSNGNTLMHLLFQKGMLKRTKKLIDLLVKFDINFNLKNKAGKGVRHRIKKNDALLLAWNKALTESRRKNRQDPAAHLGRLSRSSAPGHTSQLKSQTSFKSLPCGTADTTLSKGLTESLPDVQVSRQEPEAVRTRSLRDRLVQDITVLIQQVELGMPLPEDSPQRDSPKVAAGTEGKKDKLQRTQRMGSSGCSGNNPVASEAGDGAQAGPGASQLVPVGNRLGVASDNQENWTMQEIQACLQDFDNMTWEIECTSEMLKKLSSKVMTKVIKKKIILAIQQLGNGEWTQGLQKRLKHSKGNIQLFEAKLDKGARMLWELAIDFSARCSENSEKIIGTERNTYSLEKSGRVYTEIIRIWDIVLDHCKLSDSIMAICSAYTRGLSCVLRKKLKGINKGQVSANMKIQKRIPRCYVEDTEAEKSLEQVDPEYFPPASAVETEYSIMKFHSFSTNMALNILNDMTATVEYPFRVGELEYAVIDLNPKPLEPIILIGRSGTGKTTCCLYRLWKKFHVYWEKAEQAGSPLLSKQILPKRRLEVEPGKEGPGREEEEHEEEEGSIKVETVDGIDEEQESEACAGGATVEPAGDSQGAEGCVPDHPHQLEHLHQIFVTKNHVLCQEVQRNFIELSKSTKATSHYKPLDPNVHKLQDLRDENFPLFVTSKQLLLLLDASLPKPFFLRNEDGSLKRTIVGWSTQEEFSIPSWEEDDEEVEADGNYNEEEKATETQTGDSDPRVYVTFEVFTNEIWPKMIKGRSSYNPALIWKEIKSFLKGSFEALSCPHGRLTEEAYKKLGRKRSPNFKEDRSEIYSLFCLYQQIRSQKGYFDEEDVLYNLSWRLSKLRVLPWSIHELYGDEIQDFTQAELALLMKCINDPNAMFLTGDTAQSIMKGVAFRFSDLLSLFHYASRSTVDKQCAVRKPKRIHQLYQNYRSHSGILNLASGVVDLLQFYFPESFDRLPRDSGLFDGPKPTLLDSCSVSDLAILLRGNKRKTQPIEFGAHQVILVANEKAKEKIPEELGLALVLTVYEAKGLEFDDVLLYNFFTDSEAYKEWKIISSFTPSSDSREEKWPLVDVPLERSSPSQARSLMVNPEMYKLLNGELKQLYTAITRARVNLWIFDENLEKRAPAFKYFIRRDFVQVVKTDENKDFDDSMFVKTSTPYEWIIQGDYYAKHQCWKVAAKCYQKGDALEKEKLALAHYTALNMKSKKFSPKEKELQYLELAKTYLECNEPKLSLKCLSYAKEFQLSAQLCERLGKIRDAAYFYKRSQCFQDAFRCFEQIQEFDLALRMYCQEELFEEAAIAVEKYEEMLKNKTFPIPKLSYSASQFYLEAAAKYLSANKSKEMMAVLSKLDVEDQLVFLKSRKCLAEAAELLNREGRREEAALLMKQHGCLLEAARLTANKDFQASCLLGVARFNVARDSDIEHTKVILREALDLCYQTSQLAGIAEAQFLLGIILRDFQKLRDAFIKFDMLNHSAGMVEALYEAASLCESEHQKVLALAPGGLEVLLNLVRALKNVTNNAEKEMVKSCFEFFGIFQVDAKYCQIAQNDPGPILRIILDLDLTLSEKKTKDHFLIVTDQVKLALNKHLLGRLCQITQILLGKAYPGICMRFIVGLKCEDEQCEDFHRPLRRCEAKCMVQSKMHLVAINGLLLEAKKVFPNVLAEDLEEMDYILSPDTYGLCKSFLNLLFPRHFHQRVLSENPMACKDILKPNYKSFRSFRCALKEYIHDLFQKESAHSRRESTDLWLSAMQAFLLSSSYPEDFEKLLRQEEDSYNRELKVLESDREDRGRGRGSRVRGIEGKFGMLVPNREDENVEKSYLCFIRLLESSMDQLYVRRNPGDYKRLFFRFMNVLIKRCKAPLVPSIINTVVLLELQFVHCGVVLTRLWKNAVLCLPKSYIALLHFWEFLYGKKDRESGEVFSIIQEYKPKDVTRAIRDFRFHLSYLVKVLCGYENMNFNVLLDSFSEIDYVISGEAERTLVLCLVMLVNAEEVLQPFCKPLLFRHFREIQTRLQLMSMDWPGQVPKRLLKVVQRVLVAASVKSVAEALQDLLFERDEEYLVDCHWRWDSVHTKGTVVRGLCHEEVRLNRLLCTGPMDQFADSEWDFGEDETHELDELAQEDRDNFLAAILSQKQRKALIQRKLRRVCLVVSLCIRWRRWVQTEHSREDREVRPGNFKRADVDRTQCDLCGVKFTRSPESYFSPGKAFEGTATEAVLISRAELEGRECRERISESYEQHIRLEGHRRQQAAYQKYLDFFHEKVDPIIEEGKVVVQGIEQSVWIRSHLGSKEQSHMLQRKVQEHIRRVSDLVEELYRRKAWAEAEEVMTQQVKILTLSVKNAQEWLKKTELRLKDEGTVQEEEYENEVEDFGELRPRRRAQKCGKQRKH</sequence>
<keyword id="KW-0025">Alternative splicing</keyword>
<keyword id="KW-0040">ANK repeat</keyword>
<keyword id="KW-1185">Reference proteome</keyword>
<keyword id="KW-0677">Repeat</keyword>
<keyword id="KW-0802">TPR repeat</keyword>
<accession>Q8BV79</accession>
<accession>Q5RJH5</accession>
<accession>Q6ZQD5</accession>
<protein>
    <recommendedName>
        <fullName>TPR and ankyrin repeat-containing protein 1</fullName>
    </recommendedName>
    <alternativeName>
        <fullName>Lupus brain antigen 1</fullName>
    </alternativeName>
</protein>
<proteinExistence type="evidence at transcript level"/>
<gene>
    <name type="primary">Trank1</name>
    <name type="synonym">Gm187</name>
    <name type="synonym">Kiaa0342</name>
    <name type="synonym">Lba1</name>
</gene>